<organism>
    <name type="scientific">Caenorhabditis elegans</name>
    <dbReference type="NCBI Taxonomy" id="6239"/>
    <lineage>
        <taxon>Eukaryota</taxon>
        <taxon>Metazoa</taxon>
        <taxon>Ecdysozoa</taxon>
        <taxon>Nematoda</taxon>
        <taxon>Chromadorea</taxon>
        <taxon>Rhabditida</taxon>
        <taxon>Rhabditina</taxon>
        <taxon>Rhabditomorpha</taxon>
        <taxon>Rhabditoidea</taxon>
        <taxon>Rhabditidae</taxon>
        <taxon>Peloderinae</taxon>
        <taxon>Caenorhabditis</taxon>
    </lineage>
</organism>
<gene>
    <name type="primary">pfn-1</name>
    <name type="ORF">Y18D10A.20</name>
</gene>
<name>PROF1_CAEEL</name>
<proteinExistence type="evidence at transcript level"/>
<reference key="1">
    <citation type="journal article" date="2006" name="Cell Motil. Cytoskeleton">
        <title>Caenorhabditis elegans expresses three functional profilins in a tissue-specific manner.</title>
        <authorList>
            <person name="Polet D."/>
            <person name="Lambrechts A."/>
            <person name="Ono K."/>
            <person name="Mah A."/>
            <person name="Peelman F."/>
            <person name="Vandekerckhove J."/>
            <person name="Baillie D.L."/>
            <person name="Ampe C."/>
            <person name="Ono S."/>
        </authorList>
    </citation>
    <scope>NUCLEOTIDE SEQUENCE [MRNA]</scope>
    <scope>FUNCTION</scope>
    <scope>SUBCELLULAR LOCATION</scope>
    <scope>TISSUE SPECIFICITY</scope>
</reference>
<reference key="2">
    <citation type="journal article" date="1998" name="Science">
        <title>Genome sequence of the nematode C. elegans: a platform for investigating biology.</title>
        <authorList>
            <consortium name="The C. elegans sequencing consortium"/>
        </authorList>
    </citation>
    <scope>NUCLEOTIDE SEQUENCE [LARGE SCALE GENOMIC DNA]</scope>
    <source>
        <strain>Bristol N2</strain>
    </source>
</reference>
<protein>
    <recommendedName>
        <fullName>Profilin-1</fullName>
    </recommendedName>
</protein>
<sequence length="132" mass="14255">MSGWNAYIDTMTAAAPSIKRCAIVGAADGSVWARTEADNVFKASEEELKTFVALFNDVTQVPAKGADIEGVHYVVPRTEESLIFGKKENTGFFAVKTKSAVLIAVYEGPNEVAAQVRKAVESMQTYLNNAGY</sequence>
<feature type="chain" id="PRO_0000199590" description="Profilin-1">
    <location>
        <begin position="1"/>
        <end position="132"/>
    </location>
</feature>
<keyword id="KW-0009">Actin-binding</keyword>
<keyword id="KW-0963">Cytoplasm</keyword>
<keyword id="KW-0206">Cytoskeleton</keyword>
<keyword id="KW-1185">Reference proteome</keyword>
<evidence type="ECO:0000250" key="1"/>
<evidence type="ECO:0000269" key="2">
    <source>
    </source>
</evidence>
<evidence type="ECO:0000305" key="3"/>
<comment type="function">
    <text evidence="2">Binds to actin and affects the structure of the cytoskeleton. At high concentrations, profilin prevents the polymerization of actin, whereas it enhances it at low concentrations. By binding to PIP2, it inhibits the formation of IP3 and DG. Also binds to poly(L-proline) and phosphatidylinositol 4,5-bisphosphate micelles.</text>
</comment>
<comment type="subunit">
    <text evidence="1">Occurs in many kinds of cells as a complex with monomeric actin in a 1:1 ratio.</text>
</comment>
<comment type="subcellular location">
    <subcellularLocation>
        <location evidence="2">Cytoplasm</location>
        <location evidence="2">Cytoskeleton</location>
    </subcellularLocation>
    <text>Also localized at cell-cell contacts at the early embryonic stages.</text>
</comment>
<comment type="tissue specificity">
    <text evidence="2">Expressed in the nerve ring during late embryonic stages. In adults, expression is seen in the neurons, vulva and somatic gonad.</text>
</comment>
<comment type="similarity">
    <text evidence="3">Belongs to the profilin family.</text>
</comment>
<accession>Q9XW16</accession>
<accession>Q5GHR2</accession>
<dbReference type="EMBL" id="AY530908">
    <property type="protein sequence ID" value="AAT01433.1"/>
    <property type="molecule type" value="mRNA"/>
</dbReference>
<dbReference type="EMBL" id="AL034393">
    <property type="protein sequence ID" value="CAA22318.1"/>
    <property type="molecule type" value="Genomic_DNA"/>
</dbReference>
<dbReference type="PIR" id="T26527">
    <property type="entry name" value="T26527"/>
</dbReference>
<dbReference type="RefSeq" id="NP_493258.1">
    <property type="nucleotide sequence ID" value="NM_060857.9"/>
</dbReference>
<dbReference type="SMR" id="Q9XW16"/>
<dbReference type="BioGRID" id="38558">
    <property type="interactions" value="37"/>
</dbReference>
<dbReference type="FunCoup" id="Q9XW16">
    <property type="interactions" value="2"/>
</dbReference>
<dbReference type="STRING" id="6239.Y18D10A.20.1"/>
<dbReference type="PaxDb" id="6239-Y18D10A.20"/>
<dbReference type="PeptideAtlas" id="Q9XW16"/>
<dbReference type="EnsemblMetazoa" id="Y18D10A.20.1">
    <property type="protein sequence ID" value="Y18D10A.20.1"/>
    <property type="gene ID" value="WBGene00003989"/>
</dbReference>
<dbReference type="GeneID" id="173161"/>
<dbReference type="KEGG" id="cel:CELE_Y18D10A.20"/>
<dbReference type="UCSC" id="Y18D10A.20">
    <property type="organism name" value="c. elegans"/>
</dbReference>
<dbReference type="AGR" id="WB:WBGene00003989"/>
<dbReference type="CTD" id="173161"/>
<dbReference type="WormBase" id="Y18D10A.20">
    <property type="protein sequence ID" value="CE21418"/>
    <property type="gene ID" value="WBGene00003989"/>
    <property type="gene designation" value="pfn-1"/>
</dbReference>
<dbReference type="eggNOG" id="KOG1755">
    <property type="taxonomic scope" value="Eukaryota"/>
</dbReference>
<dbReference type="HOGENOM" id="CLU_120772_3_0_1"/>
<dbReference type="InParanoid" id="Q9XW16"/>
<dbReference type="OMA" id="SLYDHIE"/>
<dbReference type="OrthoDB" id="421374at2759"/>
<dbReference type="PhylomeDB" id="Q9XW16"/>
<dbReference type="PRO" id="PR:Q9XW16"/>
<dbReference type="Proteomes" id="UP000001940">
    <property type="component" value="Chromosome I"/>
</dbReference>
<dbReference type="Bgee" id="WBGene00003989">
    <property type="expression patterns" value="Expressed in germ line (C elegans) and 4 other cell types or tissues"/>
</dbReference>
<dbReference type="GO" id="GO:0005938">
    <property type="term" value="C:cell cortex"/>
    <property type="evidence" value="ECO:0000318"/>
    <property type="project" value="GO_Central"/>
</dbReference>
<dbReference type="GO" id="GO:0005856">
    <property type="term" value="C:cytoskeleton"/>
    <property type="evidence" value="ECO:0007669"/>
    <property type="project" value="UniProtKB-SubCell"/>
</dbReference>
<dbReference type="GO" id="GO:0003785">
    <property type="term" value="F:actin monomer binding"/>
    <property type="evidence" value="ECO:0000318"/>
    <property type="project" value="GO_Central"/>
</dbReference>
<dbReference type="GO" id="GO:0051128">
    <property type="term" value="P:regulation of cellular component organization"/>
    <property type="evidence" value="ECO:0007669"/>
    <property type="project" value="UniProtKB-ARBA"/>
</dbReference>
<dbReference type="CDD" id="cd00148">
    <property type="entry name" value="PROF"/>
    <property type="match status" value="1"/>
</dbReference>
<dbReference type="FunFam" id="3.30.450.30:FF:000020">
    <property type="entry name" value="Profilin"/>
    <property type="match status" value="1"/>
</dbReference>
<dbReference type="Gene3D" id="3.30.450.30">
    <property type="entry name" value="Dynein light chain 2a, cytoplasmic"/>
    <property type="match status" value="1"/>
</dbReference>
<dbReference type="InterPro" id="IPR048278">
    <property type="entry name" value="PFN"/>
</dbReference>
<dbReference type="InterPro" id="IPR005455">
    <property type="entry name" value="PFN_euk"/>
</dbReference>
<dbReference type="InterPro" id="IPR036140">
    <property type="entry name" value="PFN_sf"/>
</dbReference>
<dbReference type="InterPro" id="IPR027310">
    <property type="entry name" value="Profilin_CS"/>
</dbReference>
<dbReference type="PANTHER" id="PTHR11604">
    <property type="entry name" value="PROFILIN"/>
    <property type="match status" value="1"/>
</dbReference>
<dbReference type="PANTHER" id="PTHR11604:SF6">
    <property type="entry name" value="PROFILIN-1"/>
    <property type="match status" value="1"/>
</dbReference>
<dbReference type="Pfam" id="PF00235">
    <property type="entry name" value="Profilin"/>
    <property type="match status" value="1"/>
</dbReference>
<dbReference type="SMART" id="SM00392">
    <property type="entry name" value="PROF"/>
    <property type="match status" value="1"/>
</dbReference>
<dbReference type="SUPFAM" id="SSF55770">
    <property type="entry name" value="Profilin (actin-binding protein)"/>
    <property type="match status" value="1"/>
</dbReference>
<dbReference type="PROSITE" id="PS00414">
    <property type="entry name" value="PROFILIN"/>
    <property type="match status" value="1"/>
</dbReference>